<reference key="1">
    <citation type="journal article" date="1989" name="Biochemistry">
        <title>Characterization of AMD, the AMP deaminase gene in yeast. Production of amd strain, cloning, nucleotide sequence, and properties of the protein.</title>
        <authorList>
            <person name="Meyer S.L."/>
            <person name="Kvalnes-Krick K.L."/>
            <person name="Schramm V.L."/>
        </authorList>
    </citation>
    <scope>NUCLEOTIDE SEQUENCE [GENOMIC DNA]</scope>
    <scope>PROTEIN SEQUENCE OF 193-197; 200-208; 348-350; 491-498; 500-508; 581-583; 695-698 AND 783-786</scope>
    <scope>FUNCTION</scope>
    <scope>CATALYTIC ACTIVITY</scope>
</reference>
<reference key="2">
    <citation type="journal article" date="1997" name="Nature">
        <title>The nucleotide sequence of Saccharomyces cerevisiae chromosome XIII.</title>
        <authorList>
            <person name="Bowman S."/>
            <person name="Churcher C.M."/>
            <person name="Badcock K."/>
            <person name="Brown D."/>
            <person name="Chillingworth T."/>
            <person name="Connor R."/>
            <person name="Dedman K."/>
            <person name="Devlin K."/>
            <person name="Gentles S."/>
            <person name="Hamlin N."/>
            <person name="Hunt S."/>
            <person name="Jagels K."/>
            <person name="Lye G."/>
            <person name="Moule S."/>
            <person name="Odell C."/>
            <person name="Pearson D."/>
            <person name="Rajandream M.A."/>
            <person name="Rice P."/>
            <person name="Skelton J."/>
            <person name="Walsh S.V."/>
            <person name="Whitehead S."/>
            <person name="Barrell B.G."/>
        </authorList>
    </citation>
    <scope>NUCLEOTIDE SEQUENCE [LARGE SCALE GENOMIC DNA]</scope>
    <source>
        <strain>ATCC 204508 / S288c</strain>
    </source>
</reference>
<reference key="3">
    <citation type="journal article" date="2014" name="G3 (Bethesda)">
        <title>The reference genome sequence of Saccharomyces cerevisiae: Then and now.</title>
        <authorList>
            <person name="Engel S.R."/>
            <person name="Dietrich F.S."/>
            <person name="Fisk D.G."/>
            <person name="Binkley G."/>
            <person name="Balakrishnan R."/>
            <person name="Costanzo M.C."/>
            <person name="Dwight S.S."/>
            <person name="Hitz B.C."/>
            <person name="Karra K."/>
            <person name="Nash R.S."/>
            <person name="Weng S."/>
            <person name="Wong E.D."/>
            <person name="Lloyd P."/>
            <person name="Skrzypek M.S."/>
            <person name="Miyasato S.R."/>
            <person name="Simison M."/>
            <person name="Cherry J.M."/>
        </authorList>
    </citation>
    <scope>GENOME REANNOTATION</scope>
    <source>
        <strain>ATCC 204508 / S288c</strain>
    </source>
</reference>
<reference key="4">
    <citation type="journal article" date="2003" name="Nature">
        <title>Global analysis of protein expression in yeast.</title>
        <authorList>
            <person name="Ghaemmaghami S."/>
            <person name="Huh W.-K."/>
            <person name="Bower K."/>
            <person name="Howson R.W."/>
            <person name="Belle A."/>
            <person name="Dephoure N."/>
            <person name="O'Shea E.K."/>
            <person name="Weissman J.S."/>
        </authorList>
    </citation>
    <scope>LEVEL OF PROTEIN EXPRESSION [LARGE SCALE ANALYSIS]</scope>
</reference>
<reference key="5">
    <citation type="journal article" date="2005" name="Mol. Cell. Proteomics">
        <title>Quantitative phosphoproteomics applied to the yeast pheromone signaling pathway.</title>
        <authorList>
            <person name="Gruhler A."/>
            <person name="Olsen J.V."/>
            <person name="Mohammed S."/>
            <person name="Mortensen P."/>
            <person name="Faergeman N.J."/>
            <person name="Mann M."/>
            <person name="Jensen O.N."/>
        </authorList>
    </citation>
    <scope>PHOSPHORYLATION [LARGE SCALE ANALYSIS] AT SER-138</scope>
    <scope>IDENTIFICATION BY MASS SPECTROMETRY [LARGE SCALE ANALYSIS]</scope>
    <source>
        <strain>YAL6B</strain>
    </source>
</reference>
<reference key="6">
    <citation type="journal article" date="2007" name="J. Proteome Res.">
        <title>Large-scale phosphorylation analysis of alpha-factor-arrested Saccharomyces cerevisiae.</title>
        <authorList>
            <person name="Li X."/>
            <person name="Gerber S.A."/>
            <person name="Rudner A.D."/>
            <person name="Beausoleil S.A."/>
            <person name="Haas W."/>
            <person name="Villen J."/>
            <person name="Elias J.E."/>
            <person name="Gygi S.P."/>
        </authorList>
    </citation>
    <scope>PHOSPHORYLATION [LARGE SCALE ANALYSIS] AT SER-58; SER-61 AND SER-138</scope>
    <scope>IDENTIFICATION BY MASS SPECTROMETRY [LARGE SCALE ANALYSIS]</scope>
    <source>
        <strain>ADR376</strain>
    </source>
</reference>
<reference key="7">
    <citation type="journal article" date="2007" name="Proc. Natl. Acad. Sci. U.S.A.">
        <title>Analysis of phosphorylation sites on proteins from Saccharomyces cerevisiae by electron transfer dissociation (ETD) mass spectrometry.</title>
        <authorList>
            <person name="Chi A."/>
            <person name="Huttenhower C."/>
            <person name="Geer L.Y."/>
            <person name="Coon J.J."/>
            <person name="Syka J.E.P."/>
            <person name="Bai D.L."/>
            <person name="Shabanowitz J."/>
            <person name="Burke D.J."/>
            <person name="Troyanskaya O.G."/>
            <person name="Hunt D.F."/>
        </authorList>
    </citation>
    <scope>PHOSPHORYLATION [LARGE SCALE ANALYSIS] AT SER-138</scope>
    <scope>IDENTIFICATION BY MASS SPECTROMETRY [LARGE SCALE ANALYSIS]</scope>
</reference>
<reference key="8">
    <citation type="journal article" date="2008" name="Mol. Cell. Proteomics">
        <title>A multidimensional chromatography technology for in-depth phosphoproteome analysis.</title>
        <authorList>
            <person name="Albuquerque C.P."/>
            <person name="Smolka M.B."/>
            <person name="Payne S.H."/>
            <person name="Bafna V."/>
            <person name="Eng J."/>
            <person name="Zhou H."/>
        </authorList>
    </citation>
    <scope>PHOSPHORYLATION [LARGE SCALE ANALYSIS] AT SER-19; SER-58 AND SER-61</scope>
    <scope>IDENTIFICATION BY MASS SPECTROMETRY [LARGE SCALE ANALYSIS]</scope>
</reference>
<reference key="9">
    <citation type="journal article" date="2009" name="Science">
        <title>Global analysis of Cdk1 substrate phosphorylation sites provides insights into evolution.</title>
        <authorList>
            <person name="Holt L.J."/>
            <person name="Tuch B.B."/>
            <person name="Villen J."/>
            <person name="Johnson A.D."/>
            <person name="Gygi S.P."/>
            <person name="Morgan D.O."/>
        </authorList>
    </citation>
    <scope>PHOSPHORYLATION [LARGE SCALE ANALYSIS] AT SER-19; SER-58 AND SER-61</scope>
    <scope>IDENTIFICATION BY MASS SPECTROMETRY [LARGE SCALE ANALYSIS]</scope>
</reference>
<reference key="10">
    <citation type="journal article" date="2012" name="Proc. Natl. Acad. Sci. U.S.A.">
        <title>N-terminal acetylome analyses and functional insights of the N-terminal acetyltransferase NatB.</title>
        <authorList>
            <person name="Van Damme P."/>
            <person name="Lasa M."/>
            <person name="Polevoda B."/>
            <person name="Gazquez C."/>
            <person name="Elosegui-Artola A."/>
            <person name="Kim D.S."/>
            <person name="De Juan-Pardo E."/>
            <person name="Demeyer K."/>
            <person name="Hole K."/>
            <person name="Larrea E."/>
            <person name="Timmerman E."/>
            <person name="Prieto J."/>
            <person name="Arnesen T."/>
            <person name="Sherman F."/>
            <person name="Gevaert K."/>
            <person name="Aldabe R."/>
        </authorList>
    </citation>
    <scope>IDENTIFICATION BY MASS SPECTROMETRY [LARGE SCALE ANALYSIS]</scope>
</reference>
<gene>
    <name type="primary">AMD1</name>
    <name type="synonym">AMD</name>
    <name type="ordered locus">YML035C</name>
</gene>
<evidence type="ECO:0000250" key="1"/>
<evidence type="ECO:0000255" key="2">
    <source>
        <dbReference type="PROSITE-ProRule" id="PRU10104"/>
    </source>
</evidence>
<evidence type="ECO:0000256" key="3">
    <source>
        <dbReference type="SAM" id="MobiDB-lite"/>
    </source>
</evidence>
<evidence type="ECO:0000269" key="4">
    <source>
    </source>
</evidence>
<evidence type="ECO:0000269" key="5">
    <source>
    </source>
</evidence>
<evidence type="ECO:0000305" key="6"/>
<evidence type="ECO:0000305" key="7">
    <source>
    </source>
</evidence>
<evidence type="ECO:0007744" key="8">
    <source>
    </source>
</evidence>
<evidence type="ECO:0007744" key="9">
    <source>
    </source>
</evidence>
<evidence type="ECO:0007744" key="10">
    <source>
    </source>
</evidence>
<evidence type="ECO:0007744" key="11">
    <source>
    </source>
</evidence>
<evidence type="ECO:0007744" key="12">
    <source>
    </source>
</evidence>
<comment type="function">
    <text evidence="7">AMP deaminase plays a critical role in energy metabolism.</text>
</comment>
<comment type="catalytic activity">
    <reaction evidence="5">
        <text>AMP + H2O + H(+) = IMP + NH4(+)</text>
        <dbReference type="Rhea" id="RHEA:14777"/>
        <dbReference type="ChEBI" id="CHEBI:15377"/>
        <dbReference type="ChEBI" id="CHEBI:15378"/>
        <dbReference type="ChEBI" id="CHEBI:28938"/>
        <dbReference type="ChEBI" id="CHEBI:58053"/>
        <dbReference type="ChEBI" id="CHEBI:456215"/>
        <dbReference type="EC" id="3.5.4.6"/>
    </reaction>
    <physiologicalReaction direction="left-to-right" evidence="5">
        <dbReference type="Rhea" id="RHEA:14778"/>
    </physiologicalReaction>
</comment>
<comment type="cofactor">
    <cofactor evidence="1">
        <name>Zn(2+)</name>
        <dbReference type="ChEBI" id="CHEBI:29105"/>
    </cofactor>
    <text evidence="1">Binds 1 zinc ion per subunit.</text>
</comment>
<comment type="pathway">
    <text evidence="7">Purine metabolism; IMP biosynthesis via salvage pathway; IMP from AMP: step 1/1.</text>
</comment>
<comment type="subunit">
    <text>Homotetramer.</text>
</comment>
<comment type="interaction">
    <interactant intactId="EBI-2548">
        <id>P15274</id>
    </interactant>
    <interactant intactId="EBI-701">
        <id>P33203</id>
        <label>PRP40</label>
    </interactant>
    <organismsDiffer>false</organismsDiffer>
    <experiments>2</experiments>
</comment>
<comment type="interaction">
    <interactant intactId="EBI-2548">
        <id>P15274</id>
    </interactant>
    <interactant intactId="EBI-25926">
        <id>P40361</id>
        <label>YJL070C</label>
    </interactant>
    <organismsDiffer>false</organismsDiffer>
    <experiments>3</experiments>
</comment>
<comment type="miscellaneous">
    <text evidence="4">Present with 3910 molecules/cell in log phase SD medium.</text>
</comment>
<comment type="similarity">
    <text evidence="6">Belongs to the metallo-dependent hydrolases superfamily. Adenosine and AMP deaminases family.</text>
</comment>
<accession>P15274</accession>
<accession>D6VZE0</accession>
<feature type="chain" id="PRO_0000194414" description="AMP deaminase">
    <location>
        <begin position="1"/>
        <end position="810"/>
    </location>
</feature>
<feature type="region of interest" description="Disordered" evidence="3">
    <location>
        <begin position="1"/>
        <end position="61"/>
    </location>
</feature>
<feature type="region of interest" description="Disordered" evidence="3">
    <location>
        <begin position="114"/>
        <end position="137"/>
    </location>
</feature>
<feature type="compositionally biased region" description="Polar residues" evidence="3">
    <location>
        <begin position="1"/>
        <end position="10"/>
    </location>
</feature>
<feature type="compositionally biased region" description="Polar residues" evidence="3">
    <location>
        <begin position="125"/>
        <end position="137"/>
    </location>
</feature>
<feature type="active site" description="Proton acceptor" evidence="2">
    <location>
        <position position="652"/>
    </location>
</feature>
<feature type="binding site" evidence="1">
    <location>
        <position position="362"/>
    </location>
    <ligand>
        <name>Zn(2+)</name>
        <dbReference type="ChEBI" id="CHEBI:29105"/>
        <note>catalytic</note>
    </ligand>
</feature>
<feature type="binding site" evidence="1">
    <location>
        <position position="364"/>
    </location>
    <ligand>
        <name>substrate</name>
    </ligand>
</feature>
<feature type="binding site" evidence="1">
    <location>
        <position position="364"/>
    </location>
    <ligand>
        <name>Zn(2+)</name>
        <dbReference type="ChEBI" id="CHEBI:29105"/>
        <note>catalytic</note>
    </ligand>
</feature>
<feature type="binding site" evidence="1">
    <location>
        <begin position="433"/>
        <end position="438"/>
    </location>
    <ligand>
        <name>substrate</name>
    </ligand>
</feature>
<feature type="binding site" evidence="1">
    <location>
        <position position="630"/>
    </location>
    <ligand>
        <name>Zn(2+)</name>
        <dbReference type="ChEBI" id="CHEBI:29105"/>
        <note>catalytic</note>
    </ligand>
</feature>
<feature type="binding site" evidence="1">
    <location>
        <position position="633"/>
    </location>
    <ligand>
        <name>substrate</name>
    </ligand>
</feature>
<feature type="binding site" evidence="1">
    <location>
        <position position="707"/>
    </location>
    <ligand>
        <name>Zn(2+)</name>
        <dbReference type="ChEBI" id="CHEBI:29105"/>
        <note>catalytic</note>
    </ligand>
</feature>
<feature type="binding site" evidence="1">
    <location>
        <begin position="708"/>
        <end position="711"/>
    </location>
    <ligand>
        <name>substrate</name>
    </ligand>
</feature>
<feature type="modified residue" description="Phosphoserine" evidence="11 12">
    <location>
        <position position="19"/>
    </location>
</feature>
<feature type="modified residue" description="Phosphoserine" evidence="10 11 12">
    <location>
        <position position="58"/>
    </location>
</feature>
<feature type="modified residue" description="Phosphoserine" evidence="10 11 12">
    <location>
        <position position="61"/>
    </location>
</feature>
<feature type="modified residue" description="Phosphoserine" evidence="8 9 10">
    <location>
        <position position="138"/>
    </location>
</feature>
<feature type="sequence conflict" description="In Ref. 1; AAA34420." evidence="6" ref="1">
    <original>F</original>
    <variation>C</variation>
    <location>
        <position position="568"/>
    </location>
</feature>
<keyword id="KW-0903">Direct protein sequencing</keyword>
<keyword id="KW-0378">Hydrolase</keyword>
<keyword id="KW-0479">Metal-binding</keyword>
<keyword id="KW-0546">Nucleotide metabolism</keyword>
<keyword id="KW-0597">Phosphoprotein</keyword>
<keyword id="KW-1185">Reference proteome</keyword>
<keyword id="KW-0862">Zinc</keyword>
<name>AMPD_YEAST</name>
<proteinExistence type="evidence at protein level"/>
<organism>
    <name type="scientific">Saccharomyces cerevisiae (strain ATCC 204508 / S288c)</name>
    <name type="common">Baker's yeast</name>
    <dbReference type="NCBI Taxonomy" id="559292"/>
    <lineage>
        <taxon>Eukaryota</taxon>
        <taxon>Fungi</taxon>
        <taxon>Dikarya</taxon>
        <taxon>Ascomycota</taxon>
        <taxon>Saccharomycotina</taxon>
        <taxon>Saccharomycetes</taxon>
        <taxon>Saccharomycetales</taxon>
        <taxon>Saccharomycetaceae</taxon>
        <taxon>Saccharomyces</taxon>
    </lineage>
</organism>
<sequence length="810" mass="93302">MDNQATQRLNDLSLEPAPSHDEQDGSGLVIDIDQRKIGDEQAGVVVDDETPPLEQQDSHESLAADSRNANFSYHENQQLLENGTKQLALDEHDSHSAILEQPSHSTNCSSSNIAAMNKGHDSADHASQNSGGKPRTLSASAQHILPETLKSFAGAPVVNKQVRTSASYKMGMLADDASQQFLDDPSSELIDLYSKVAECRNLRAKYQTISVQNDDQNPKNKPGWVVYPPPPKPSYNSDTKTVVPVTNKPDAEVFDFTKCEIPGEDPDWEFTLNDDDSYVVHRSGKTDELIAQIPTLRDYYLDLEKMISISSDGPAKSFAYRRLQYLEARWNLYYLLNEYQETSVSKRNPHRDFYNVRKVDTHVHHSACMNQKHLLRFIKHKLRHSKDEKVIFRDGKLLTLDEVFRSLHLTGYDLSIDTLDMHAHKDTFHRFDKFNLKYNPIGESRLREIFLKTNNYIKGTYLADITKQVIFDLENSKYQNCEYRISVYGRSLDEWDKLASWVIDNKVISHNVRWLVQIPRLYDIYKKTGIVQSFQDICKNLFQPLFEVTKNPQSHPKLHVFLQRVIGFDSVDDESKVDRRFHRKYPKPSLWEAPQNPPYSYYLYYLYSNVASLNQWRAKRGFNTLVLRPHCGEAGDPEHLVSAYLLAHGISHGILLRKVPFVQYLYYLDQVGIAMSPLSNNALFLTYDKNPFPRYFKRGLNVSLSTDDPLQFSYTREPLIEEYSVAAQIYKLSNVDMCELARNSVLQSGWEAQIKKHWIGKDFDKSGVEGNDVVRTNVPDIRINYRYDTLSTELELVNHFANFKRTIEEK</sequence>
<protein>
    <recommendedName>
        <fullName>AMP deaminase</fullName>
        <ecNumber evidence="5">3.5.4.6</ecNumber>
    </recommendedName>
    <alternativeName>
        <fullName>Myoadenylate deaminase</fullName>
    </alternativeName>
</protein>
<dbReference type="EC" id="3.5.4.6" evidence="5"/>
<dbReference type="EMBL" id="M30449">
    <property type="protein sequence ID" value="AAA34420.1"/>
    <property type="molecule type" value="Genomic_DNA"/>
</dbReference>
<dbReference type="EMBL" id="Z46659">
    <property type="protein sequence ID" value="CAA86620.1"/>
    <property type="molecule type" value="Genomic_DNA"/>
</dbReference>
<dbReference type="EMBL" id="BK006946">
    <property type="protein sequence ID" value="DAA09864.1"/>
    <property type="molecule type" value="Genomic_DNA"/>
</dbReference>
<dbReference type="PIR" id="S49744">
    <property type="entry name" value="S49744"/>
</dbReference>
<dbReference type="RefSeq" id="NP_013677.1">
    <property type="nucleotide sequence ID" value="NM_001182392.1"/>
</dbReference>
<dbReference type="SMR" id="P15274"/>
<dbReference type="BioGRID" id="35135">
    <property type="interactions" value="246"/>
</dbReference>
<dbReference type="DIP" id="DIP-1949N"/>
<dbReference type="FunCoup" id="P15274">
    <property type="interactions" value="674"/>
</dbReference>
<dbReference type="IntAct" id="P15274">
    <property type="interactions" value="12"/>
</dbReference>
<dbReference type="MINT" id="P15274"/>
<dbReference type="STRING" id="4932.YML035C"/>
<dbReference type="iPTMnet" id="P15274"/>
<dbReference type="PaxDb" id="4932-YML035C"/>
<dbReference type="PeptideAtlas" id="P15274"/>
<dbReference type="EnsemblFungi" id="YML035C_mRNA">
    <property type="protein sequence ID" value="YML035C"/>
    <property type="gene ID" value="YML035C"/>
</dbReference>
<dbReference type="GeneID" id="854973"/>
<dbReference type="KEGG" id="sce:YML035C"/>
<dbReference type="AGR" id="SGD:S000004498"/>
<dbReference type="SGD" id="S000004498">
    <property type="gene designation" value="AMD1"/>
</dbReference>
<dbReference type="VEuPathDB" id="FungiDB:YML035C"/>
<dbReference type="eggNOG" id="KOG1096">
    <property type="taxonomic scope" value="Eukaryota"/>
</dbReference>
<dbReference type="GeneTree" id="ENSGT00950000183011"/>
<dbReference type="HOGENOM" id="CLU_003782_2_1_1"/>
<dbReference type="InParanoid" id="P15274"/>
<dbReference type="OMA" id="FHRKFPY"/>
<dbReference type="OrthoDB" id="1723809at2759"/>
<dbReference type="BioCyc" id="YEAST:YML035C-MONOMER"/>
<dbReference type="Reactome" id="R-SCE-6798695">
    <property type="pathway name" value="Neutrophil degranulation"/>
</dbReference>
<dbReference type="Reactome" id="R-SCE-74217">
    <property type="pathway name" value="Purine salvage"/>
</dbReference>
<dbReference type="UniPathway" id="UPA00591">
    <property type="reaction ID" value="UER00663"/>
</dbReference>
<dbReference type="BioGRID-ORCS" id="854973">
    <property type="hits" value="8 hits in 10 CRISPR screens"/>
</dbReference>
<dbReference type="PRO" id="PR:P15274"/>
<dbReference type="Proteomes" id="UP000002311">
    <property type="component" value="Chromosome XIII"/>
</dbReference>
<dbReference type="RNAct" id="P15274">
    <property type="molecule type" value="protein"/>
</dbReference>
<dbReference type="GO" id="GO:0005737">
    <property type="term" value="C:cytoplasm"/>
    <property type="evidence" value="ECO:0007005"/>
    <property type="project" value="SGD"/>
</dbReference>
<dbReference type="GO" id="GO:0005829">
    <property type="term" value="C:cytosol"/>
    <property type="evidence" value="ECO:0000318"/>
    <property type="project" value="GO_Central"/>
</dbReference>
<dbReference type="GO" id="GO:0003876">
    <property type="term" value="F:AMP deaminase activity"/>
    <property type="evidence" value="ECO:0000314"/>
    <property type="project" value="SGD"/>
</dbReference>
<dbReference type="GO" id="GO:0046872">
    <property type="term" value="F:metal ion binding"/>
    <property type="evidence" value="ECO:0007669"/>
    <property type="project" value="UniProtKB-KW"/>
</dbReference>
<dbReference type="GO" id="GO:0046033">
    <property type="term" value="P:AMP metabolic process"/>
    <property type="evidence" value="ECO:0000318"/>
    <property type="project" value="GO_Central"/>
</dbReference>
<dbReference type="GO" id="GO:0006178">
    <property type="term" value="P:guanine salvage"/>
    <property type="evidence" value="ECO:0000315"/>
    <property type="project" value="SGD"/>
</dbReference>
<dbReference type="GO" id="GO:0006188">
    <property type="term" value="P:IMP biosynthetic process"/>
    <property type="evidence" value="ECO:0000318"/>
    <property type="project" value="GO_Central"/>
</dbReference>
<dbReference type="GO" id="GO:0032264">
    <property type="term" value="P:IMP salvage"/>
    <property type="evidence" value="ECO:0007669"/>
    <property type="project" value="UniProtKB-UniPathway"/>
</dbReference>
<dbReference type="GO" id="GO:0006163">
    <property type="term" value="P:purine nucleotide metabolic process"/>
    <property type="evidence" value="ECO:0000315"/>
    <property type="project" value="SGD"/>
</dbReference>
<dbReference type="CDD" id="cd01319">
    <property type="entry name" value="AMPD"/>
    <property type="match status" value="1"/>
</dbReference>
<dbReference type="FunFam" id="4.10.800.20:FF:000001">
    <property type="entry name" value="AMP deaminase"/>
    <property type="match status" value="1"/>
</dbReference>
<dbReference type="FunFam" id="3.20.20.140:FF:000035">
    <property type="entry name" value="Probable amp deaminase"/>
    <property type="match status" value="1"/>
</dbReference>
<dbReference type="Gene3D" id="4.10.800.20">
    <property type="match status" value="1"/>
</dbReference>
<dbReference type="Gene3D" id="3.20.20.140">
    <property type="entry name" value="Metal-dependent hydrolases"/>
    <property type="match status" value="1"/>
</dbReference>
<dbReference type="InterPro" id="IPR006650">
    <property type="entry name" value="A/AMP_deam_AS"/>
</dbReference>
<dbReference type="InterPro" id="IPR006329">
    <property type="entry name" value="AMPD"/>
</dbReference>
<dbReference type="InterPro" id="IPR032466">
    <property type="entry name" value="Metal_Hydrolase"/>
</dbReference>
<dbReference type="NCBIfam" id="TIGR01429">
    <property type="entry name" value="AMP_deaminase"/>
    <property type="match status" value="1"/>
</dbReference>
<dbReference type="PANTHER" id="PTHR11359">
    <property type="entry name" value="AMP DEAMINASE"/>
    <property type="match status" value="1"/>
</dbReference>
<dbReference type="PANTHER" id="PTHR11359:SF0">
    <property type="entry name" value="AMP DEAMINASE"/>
    <property type="match status" value="1"/>
</dbReference>
<dbReference type="Pfam" id="PF19326">
    <property type="entry name" value="AMP_deaminase"/>
    <property type="match status" value="1"/>
</dbReference>
<dbReference type="PIRSF" id="PIRSF001251">
    <property type="entry name" value="AMP_deaminase_met"/>
    <property type="match status" value="1"/>
</dbReference>
<dbReference type="SUPFAM" id="SSF51556">
    <property type="entry name" value="Metallo-dependent hydrolases"/>
    <property type="match status" value="1"/>
</dbReference>
<dbReference type="PROSITE" id="PS00485">
    <property type="entry name" value="A_DEAMINASE"/>
    <property type="match status" value="1"/>
</dbReference>